<evidence type="ECO:0000250" key="1">
    <source>
        <dbReference type="UniProtKB" id="P0CC17"/>
    </source>
</evidence>
<evidence type="ECO:0000250" key="2">
    <source>
        <dbReference type="UniProtKB" id="P81382"/>
    </source>
</evidence>
<evidence type="ECO:0000269" key="3">
    <source>
    </source>
</evidence>
<evidence type="ECO:0000303" key="4">
    <source>
    </source>
</evidence>
<evidence type="ECO:0000305" key="5"/>
<evidence type="ECO:0000305" key="6">
    <source>
    </source>
</evidence>
<dbReference type="EC" id="1.4.3.2" evidence="3"/>
<dbReference type="SMR" id="P0C2D2"/>
<dbReference type="GO" id="GO:0005576">
    <property type="term" value="C:extracellular region"/>
    <property type="evidence" value="ECO:0007669"/>
    <property type="project" value="UniProtKB-SubCell"/>
</dbReference>
<dbReference type="GO" id="GO:0001716">
    <property type="term" value="F:L-amino-acid oxidase activity"/>
    <property type="evidence" value="ECO:0007669"/>
    <property type="project" value="UniProtKB-EC"/>
</dbReference>
<dbReference type="GO" id="GO:0090729">
    <property type="term" value="F:toxin activity"/>
    <property type="evidence" value="ECO:0007669"/>
    <property type="project" value="UniProtKB-KW"/>
</dbReference>
<dbReference type="GO" id="GO:0006915">
    <property type="term" value="P:apoptotic process"/>
    <property type="evidence" value="ECO:0007669"/>
    <property type="project" value="UniProtKB-KW"/>
</dbReference>
<dbReference type="GO" id="GO:0042742">
    <property type="term" value="P:defense response to bacterium"/>
    <property type="evidence" value="ECO:0007669"/>
    <property type="project" value="UniProtKB-KW"/>
</dbReference>
<dbReference type="GO" id="GO:0031640">
    <property type="term" value="P:killing of cells of another organism"/>
    <property type="evidence" value="ECO:0007669"/>
    <property type="project" value="UniProtKB-KW"/>
</dbReference>
<dbReference type="Gene3D" id="3.90.660.10">
    <property type="match status" value="1"/>
</dbReference>
<dbReference type="InterPro" id="IPR003953">
    <property type="entry name" value="FAD-dep_OxRdtase_2_FAD-bd"/>
</dbReference>
<dbReference type="InterPro" id="IPR036188">
    <property type="entry name" value="FAD/NAD-bd_sf"/>
</dbReference>
<dbReference type="Pfam" id="PF00890">
    <property type="entry name" value="FAD_binding_2"/>
    <property type="match status" value="1"/>
</dbReference>
<dbReference type="SUPFAM" id="SSF51905">
    <property type="entry name" value="FAD/NAD(P)-binding domain"/>
    <property type="match status" value="1"/>
</dbReference>
<protein>
    <recommendedName>
        <fullName>L-amino-acid oxidase</fullName>
        <shortName evidence="4">Casca LAO</shortName>
        <shortName>LAAO</shortName>
        <ecNumber evidence="3">1.4.3.2</ecNumber>
    </recommendedName>
</protein>
<comment type="function">
    <text evidence="1 3">Catalyzes an oxidative deamination of predominantly hydrophobic and aromatic L-amino acids, thus producing hydrogen peroxide that may contribute to the diverse toxic effects of this enzyme (PubMed:16307769). Shows activity on L-Leu (PubMed:16307769). Exhibits diverse biological activities, such as apoptosis, antibacterial activities against both Gram-negative and Gram-positive bacteria and antiparasitic activities, as well as induction of platelet aggregation (PubMed:16307769). Effects of snake L-amino oxidases on platelets are controversial, since they either induce aggregation or inhibit agonist-induced aggregation (By similarity). These different effects are probably due to different experimental conditions (By similarity). This protein may also induce hemorrhage, hemolysis, and edema (By similarity).</text>
</comment>
<comment type="catalytic activity">
    <reaction evidence="3">
        <text>an L-alpha-amino acid + O2 + H2O = a 2-oxocarboxylate + H2O2 + NH4(+)</text>
        <dbReference type="Rhea" id="RHEA:13781"/>
        <dbReference type="ChEBI" id="CHEBI:15377"/>
        <dbReference type="ChEBI" id="CHEBI:15379"/>
        <dbReference type="ChEBI" id="CHEBI:16240"/>
        <dbReference type="ChEBI" id="CHEBI:28938"/>
        <dbReference type="ChEBI" id="CHEBI:35179"/>
        <dbReference type="ChEBI" id="CHEBI:59869"/>
        <dbReference type="EC" id="1.4.3.2"/>
    </reaction>
</comment>
<comment type="catalytic activity">
    <reaction evidence="3">
        <text>L-leucine + O2 + H2O = 4-methyl-2-oxopentanoate + H2O2 + NH4(+)</text>
        <dbReference type="Rhea" id="RHEA:60996"/>
        <dbReference type="ChEBI" id="CHEBI:15377"/>
        <dbReference type="ChEBI" id="CHEBI:15379"/>
        <dbReference type="ChEBI" id="CHEBI:16240"/>
        <dbReference type="ChEBI" id="CHEBI:17865"/>
        <dbReference type="ChEBI" id="CHEBI:28938"/>
        <dbReference type="ChEBI" id="CHEBI:57427"/>
    </reaction>
</comment>
<comment type="cofactor">
    <cofactor evidence="3">
        <name>FAD</name>
        <dbReference type="ChEBI" id="CHEBI:57692"/>
    </cofactor>
</comment>
<comment type="biophysicochemical properties">
    <kinetics>
        <KM evidence="3">46.7 uM for L-Leu</KM>
    </kinetics>
    <phDependence>
        <text evidence="3">Optimum pH is 6.5.</text>
    </phDependence>
</comment>
<comment type="subunit">
    <text evidence="3">Homodimer; non-covalently linked.</text>
</comment>
<comment type="subcellular location">
    <subcellularLocation>
        <location evidence="3">Secreted</location>
    </subcellularLocation>
</comment>
<comment type="tissue specificity">
    <text evidence="6">Expressed by the venom gland.</text>
</comment>
<comment type="PTM">
    <text evidence="2">N-glycosylated.</text>
</comment>
<comment type="miscellaneous">
    <text evidence="6">Has parasiticidal activities against leishmania, as a result of enzyme-catalyzed hydrogen peroxide production.</text>
</comment>
<comment type="similarity">
    <text evidence="5">Belongs to the flavin monoamine oxidase family. FIG1 subfamily.</text>
</comment>
<keyword id="KW-0044">Antibiotic</keyword>
<keyword id="KW-0929">Antimicrobial</keyword>
<keyword id="KW-0053">Apoptosis</keyword>
<keyword id="KW-0204">Cytolysis</keyword>
<keyword id="KW-0903">Direct protein sequencing</keyword>
<keyword id="KW-1015">Disulfide bond</keyword>
<keyword id="KW-0274">FAD</keyword>
<keyword id="KW-0285">Flavoprotein</keyword>
<keyword id="KW-0325">Glycoprotein</keyword>
<keyword id="KW-0354">Hemolysis</keyword>
<keyword id="KW-1199">Hemostasis impairing toxin</keyword>
<keyword id="KW-0560">Oxidoreductase</keyword>
<keyword id="KW-1202">Platelet aggregation activating toxin</keyword>
<keyword id="KW-0964">Secreted</keyword>
<keyword id="KW-0800">Toxin</keyword>
<accession>P0C2D2</accession>
<proteinExistence type="evidence at protein level"/>
<reference key="1">
    <citation type="journal article" date="2006" name="Toxicon">
        <title>Isolation of a new L-amino acid oxidase from Crotalus durissus cascavella venom.</title>
        <authorList>
            <person name="Toyama M.H."/>
            <person name="Toyama Dde O."/>
            <person name="Passero L.F."/>
            <person name="Laurenti M.D."/>
            <person name="Corbett C.E."/>
            <person name="Tomokane T.Y."/>
            <person name="Fonseca F.V."/>
            <person name="Antunes E."/>
            <person name="Joazeiro P.P."/>
            <person name="Beriam L.O."/>
            <person name="Martins M.A."/>
            <person name="Monteiro H.S."/>
            <person name="Fonteles M.C."/>
        </authorList>
    </citation>
    <scope>PROTEIN SEQUENCE</scope>
    <scope>FUNCTION</scope>
    <scope>CATALYTIC ACTIVITY</scope>
    <scope>COFACTOR</scope>
    <scope>BIOPHYSICOCHEMICAL PROPERTIES</scope>
    <scope>SUBUNIT</scope>
    <scope>SUBCELLULAR LOCATION</scope>
    <source>
        <tissue>Venom</tissue>
    </source>
</reference>
<sequence>ADDRNPLEQCFRETDYEEFLEIARNNLKATSNPKHVVIVGAGMAGLSAAYVLSGGGHQVTV</sequence>
<feature type="chain" id="PRO_0000273567" description="L-amino-acid oxidase">
    <location>
        <begin position="1"/>
        <end position="61" status="greater than"/>
    </location>
</feature>
<feature type="binding site" evidence="2">
    <location>
        <begin position="43"/>
        <end position="44"/>
    </location>
    <ligand>
        <name>FAD</name>
        <dbReference type="ChEBI" id="CHEBI:57692"/>
    </ligand>
</feature>
<feature type="disulfide bond" evidence="2">
    <location>
        <begin position="10"/>
        <end status="unknown"/>
    </location>
</feature>
<feature type="non-terminal residue" evidence="4">
    <location>
        <position position="61"/>
    </location>
</feature>
<organism>
    <name type="scientific">Crotalus durissus cascavella</name>
    <name type="common">Northeastern Brazilian rattlesnake</name>
    <dbReference type="NCBI Taxonomy" id="184540"/>
    <lineage>
        <taxon>Eukaryota</taxon>
        <taxon>Metazoa</taxon>
        <taxon>Chordata</taxon>
        <taxon>Craniata</taxon>
        <taxon>Vertebrata</taxon>
        <taxon>Euteleostomi</taxon>
        <taxon>Lepidosauria</taxon>
        <taxon>Squamata</taxon>
        <taxon>Bifurcata</taxon>
        <taxon>Unidentata</taxon>
        <taxon>Episquamata</taxon>
        <taxon>Toxicofera</taxon>
        <taxon>Serpentes</taxon>
        <taxon>Colubroidea</taxon>
        <taxon>Viperidae</taxon>
        <taxon>Crotalinae</taxon>
        <taxon>Crotalus</taxon>
    </lineage>
</organism>
<name>OXLA_CRODC</name>